<gene>
    <name evidence="1" type="primary">ribB</name>
    <name type="ordered locus">MS0172</name>
</gene>
<evidence type="ECO:0000255" key="1">
    <source>
        <dbReference type="HAMAP-Rule" id="MF_00180"/>
    </source>
</evidence>
<name>RIBB_MANSM</name>
<dbReference type="EC" id="4.1.99.12" evidence="1"/>
<dbReference type="EMBL" id="AE016827">
    <property type="protein sequence ID" value="AAU36779.1"/>
    <property type="molecule type" value="Genomic_DNA"/>
</dbReference>
<dbReference type="RefSeq" id="WP_011199355.1">
    <property type="nucleotide sequence ID" value="NC_006300.1"/>
</dbReference>
<dbReference type="SMR" id="Q65W81"/>
<dbReference type="STRING" id="221988.MS0172"/>
<dbReference type="KEGG" id="msu:MS0172"/>
<dbReference type="eggNOG" id="COG0108">
    <property type="taxonomic scope" value="Bacteria"/>
</dbReference>
<dbReference type="HOGENOM" id="CLU_020273_3_0_6"/>
<dbReference type="OrthoDB" id="9793111at2"/>
<dbReference type="UniPathway" id="UPA00275">
    <property type="reaction ID" value="UER00399"/>
</dbReference>
<dbReference type="Proteomes" id="UP000000607">
    <property type="component" value="Chromosome"/>
</dbReference>
<dbReference type="GO" id="GO:0005829">
    <property type="term" value="C:cytosol"/>
    <property type="evidence" value="ECO:0007669"/>
    <property type="project" value="TreeGrafter"/>
</dbReference>
<dbReference type="GO" id="GO:0008686">
    <property type="term" value="F:3,4-dihydroxy-2-butanone-4-phosphate synthase activity"/>
    <property type="evidence" value="ECO:0007669"/>
    <property type="project" value="UniProtKB-UniRule"/>
</dbReference>
<dbReference type="GO" id="GO:0000287">
    <property type="term" value="F:magnesium ion binding"/>
    <property type="evidence" value="ECO:0007669"/>
    <property type="project" value="UniProtKB-UniRule"/>
</dbReference>
<dbReference type="GO" id="GO:0030145">
    <property type="term" value="F:manganese ion binding"/>
    <property type="evidence" value="ECO:0007669"/>
    <property type="project" value="UniProtKB-UniRule"/>
</dbReference>
<dbReference type="GO" id="GO:0009231">
    <property type="term" value="P:riboflavin biosynthetic process"/>
    <property type="evidence" value="ECO:0007669"/>
    <property type="project" value="UniProtKB-UniRule"/>
</dbReference>
<dbReference type="FunFam" id="3.90.870.10:FF:000002">
    <property type="entry name" value="3,4-dihydroxy-2-butanone 4-phosphate synthase"/>
    <property type="match status" value="1"/>
</dbReference>
<dbReference type="Gene3D" id="3.90.870.10">
    <property type="entry name" value="DHBP synthase"/>
    <property type="match status" value="1"/>
</dbReference>
<dbReference type="HAMAP" id="MF_00180">
    <property type="entry name" value="RibB"/>
    <property type="match status" value="1"/>
</dbReference>
<dbReference type="InterPro" id="IPR017945">
    <property type="entry name" value="DHBP_synth_RibB-like_a/b_dom"/>
</dbReference>
<dbReference type="InterPro" id="IPR000422">
    <property type="entry name" value="DHBP_synthase_RibB"/>
</dbReference>
<dbReference type="NCBIfam" id="TIGR00506">
    <property type="entry name" value="ribB"/>
    <property type="match status" value="1"/>
</dbReference>
<dbReference type="PANTHER" id="PTHR21327:SF38">
    <property type="entry name" value="3,4-DIHYDROXY-2-BUTANONE 4-PHOSPHATE SYNTHASE"/>
    <property type="match status" value="1"/>
</dbReference>
<dbReference type="PANTHER" id="PTHR21327">
    <property type="entry name" value="GTP CYCLOHYDROLASE II-RELATED"/>
    <property type="match status" value="1"/>
</dbReference>
<dbReference type="Pfam" id="PF00926">
    <property type="entry name" value="DHBP_synthase"/>
    <property type="match status" value="1"/>
</dbReference>
<dbReference type="SUPFAM" id="SSF55821">
    <property type="entry name" value="YrdC/RibB"/>
    <property type="match status" value="1"/>
</dbReference>
<feature type="chain" id="PRO_1000040615" description="3,4-dihydroxy-2-butanone 4-phosphate synthase">
    <location>
        <begin position="1"/>
        <end position="214"/>
    </location>
</feature>
<feature type="binding site" evidence="1">
    <location>
        <begin position="37"/>
        <end position="38"/>
    </location>
    <ligand>
        <name>D-ribulose 5-phosphate</name>
        <dbReference type="ChEBI" id="CHEBI:58121"/>
    </ligand>
</feature>
<feature type="binding site" evidence="1">
    <location>
        <position position="38"/>
    </location>
    <ligand>
        <name>Mg(2+)</name>
        <dbReference type="ChEBI" id="CHEBI:18420"/>
        <label>1</label>
    </ligand>
</feature>
<feature type="binding site" evidence="1">
    <location>
        <position position="38"/>
    </location>
    <ligand>
        <name>Mg(2+)</name>
        <dbReference type="ChEBI" id="CHEBI:18420"/>
        <label>2</label>
    </ligand>
</feature>
<feature type="binding site" evidence="1">
    <location>
        <position position="42"/>
    </location>
    <ligand>
        <name>D-ribulose 5-phosphate</name>
        <dbReference type="ChEBI" id="CHEBI:58121"/>
    </ligand>
</feature>
<feature type="binding site" evidence="1">
    <location>
        <begin position="150"/>
        <end position="154"/>
    </location>
    <ligand>
        <name>D-ribulose 5-phosphate</name>
        <dbReference type="ChEBI" id="CHEBI:58121"/>
    </ligand>
</feature>
<feature type="binding site" evidence="1">
    <location>
        <position position="153"/>
    </location>
    <ligand>
        <name>Mg(2+)</name>
        <dbReference type="ChEBI" id="CHEBI:18420"/>
        <label>2</label>
    </ligand>
</feature>
<feature type="binding site" evidence="1">
    <location>
        <position position="174"/>
    </location>
    <ligand>
        <name>D-ribulose 5-phosphate</name>
        <dbReference type="ChEBI" id="CHEBI:58121"/>
    </ligand>
</feature>
<feature type="site" description="Essential for catalytic activity" evidence="1">
    <location>
        <position position="136"/>
    </location>
</feature>
<feature type="site" description="Essential for catalytic activity" evidence="1">
    <location>
        <position position="174"/>
    </location>
</feature>
<protein>
    <recommendedName>
        <fullName evidence="1">3,4-dihydroxy-2-butanone 4-phosphate synthase</fullName>
        <shortName evidence="1">DHBP synthase</shortName>
        <ecNumber evidence="1">4.1.99.12</ecNumber>
    </recommendedName>
</protein>
<reference key="1">
    <citation type="journal article" date="2004" name="Nat. Biotechnol.">
        <title>The genome sequence of the capnophilic rumen bacterium Mannheimia succiniciproducens.</title>
        <authorList>
            <person name="Hong S.H."/>
            <person name="Kim J.S."/>
            <person name="Lee S.Y."/>
            <person name="In Y.H."/>
            <person name="Choi S.S."/>
            <person name="Rih J.-K."/>
            <person name="Kim C.H."/>
            <person name="Jeong H."/>
            <person name="Hur C.G."/>
            <person name="Kim J.J."/>
        </authorList>
    </citation>
    <scope>NUCLEOTIDE SEQUENCE [LARGE SCALE GENOMIC DNA]</scope>
    <source>
        <strain>KCTC 0769BP / MBEL55E</strain>
    </source>
</reference>
<keyword id="KW-0456">Lyase</keyword>
<keyword id="KW-0460">Magnesium</keyword>
<keyword id="KW-0464">Manganese</keyword>
<keyword id="KW-0479">Metal-binding</keyword>
<keyword id="KW-0686">Riboflavin biosynthesis</keyword>
<accession>Q65W81</accession>
<organism>
    <name type="scientific">Mannheimia succiniciproducens (strain KCTC 0769BP / MBEL55E)</name>
    <dbReference type="NCBI Taxonomy" id="221988"/>
    <lineage>
        <taxon>Bacteria</taxon>
        <taxon>Pseudomonadati</taxon>
        <taxon>Pseudomonadota</taxon>
        <taxon>Gammaproteobacteria</taxon>
        <taxon>Pasteurellales</taxon>
        <taxon>Pasteurellaceae</taxon>
        <taxon>Basfia</taxon>
    </lineage>
</organism>
<sequence>MNQSLLASFGSSEERVIAALDTFKQGNGVLVLDDENRENEGDLIFPAETITTEQMAKLIRYGSGIVCLCITDELCQKLELPPMVAANTSVNKTAFTVTIEAAEGVSTGVSAADRVTTVKVAVADNAKPSDLHHPGHVFPLRAAENGVLARPGHTEAAVDLARLCGYKPAGVICEITNDDGTMARTPELVAFAQKFGYAVVTIEDLIAYRTKYNK</sequence>
<comment type="function">
    <text evidence="1">Catalyzes the conversion of D-ribulose 5-phosphate to formate and 3,4-dihydroxy-2-butanone 4-phosphate.</text>
</comment>
<comment type="catalytic activity">
    <reaction evidence="1">
        <text>D-ribulose 5-phosphate = (2S)-2-hydroxy-3-oxobutyl phosphate + formate + H(+)</text>
        <dbReference type="Rhea" id="RHEA:18457"/>
        <dbReference type="ChEBI" id="CHEBI:15378"/>
        <dbReference type="ChEBI" id="CHEBI:15740"/>
        <dbReference type="ChEBI" id="CHEBI:58121"/>
        <dbReference type="ChEBI" id="CHEBI:58830"/>
        <dbReference type="EC" id="4.1.99.12"/>
    </reaction>
</comment>
<comment type="cofactor">
    <cofactor evidence="1">
        <name>Mg(2+)</name>
        <dbReference type="ChEBI" id="CHEBI:18420"/>
    </cofactor>
    <cofactor evidence="1">
        <name>Mn(2+)</name>
        <dbReference type="ChEBI" id="CHEBI:29035"/>
    </cofactor>
    <text evidence="1">Binds 2 divalent metal cations per subunit. Magnesium or manganese.</text>
</comment>
<comment type="pathway">
    <text evidence="1">Cofactor biosynthesis; riboflavin biosynthesis; 2-hydroxy-3-oxobutyl phosphate from D-ribulose 5-phosphate: step 1/1.</text>
</comment>
<comment type="subunit">
    <text evidence="1">Homodimer.</text>
</comment>
<comment type="similarity">
    <text evidence="1">Belongs to the DHBP synthase family.</text>
</comment>
<proteinExistence type="inferred from homology"/>